<protein>
    <recommendedName>
        <fullName evidence="2">Initiator protein NS1</fullName>
        <shortName>NS1</shortName>
        <ecNumber evidence="3">3.1.21.-</ecNumber>
        <ecNumber evidence="3">3.6.4.12</ecNumber>
    </recommendedName>
    <alternativeName>
        <fullName>Non-structural protein 1</fullName>
    </alternativeName>
    <alternativeName>
        <fullName>Non-structural protein NS1</fullName>
    </alternativeName>
</protein>
<feature type="chain" id="PRO_0000445634" description="Initiator protein NS1">
    <location>
        <begin position="1"/>
        <end position="776"/>
    </location>
</feature>
<feature type="domain" description="PV NS1-Nuc" evidence="5">
    <location>
        <begin position="11"/>
        <end position="271"/>
    </location>
</feature>
<feature type="domain" description="SF3 helicase" evidence="4">
    <location>
        <begin position="397"/>
        <end position="552"/>
    </location>
</feature>
<feature type="region of interest" description="Ori-binding" evidence="2">
    <location>
        <begin position="193"/>
        <end position="197"/>
    </location>
</feature>
<feature type="region of interest" description="Transactivation" evidence="2">
    <location>
        <begin position="606"/>
        <end position="776"/>
    </location>
</feature>
<feature type="region of interest" description="Disordered" evidence="6">
    <location>
        <begin position="628"/>
        <end position="752"/>
    </location>
</feature>
<feature type="short sequence motif" description="RCR-2" evidence="5">
    <location>
        <begin position="115"/>
        <end position="117"/>
    </location>
</feature>
<feature type="short sequence motif" description="RCR-3" evidence="5">
    <location>
        <begin position="211"/>
        <end position="215"/>
    </location>
</feature>
<feature type="compositionally biased region" description="Basic and acidic residues" evidence="6">
    <location>
        <begin position="646"/>
        <end position="659"/>
    </location>
</feature>
<feature type="compositionally biased region" description="Low complexity" evidence="6">
    <location>
        <begin position="667"/>
        <end position="681"/>
    </location>
</feature>
<feature type="compositionally biased region" description="Basic and acidic residues" evidence="6">
    <location>
        <begin position="691"/>
        <end position="701"/>
    </location>
</feature>
<feature type="compositionally biased region" description="Polar residues" evidence="6">
    <location>
        <begin position="703"/>
        <end position="713"/>
    </location>
</feature>
<feature type="active site" description="For nuclease activity" evidence="5">
    <location>
        <position position="211"/>
    </location>
</feature>
<feature type="binding site" evidence="5">
    <location>
        <position position="108"/>
    </location>
    <ligand>
        <name>a divalent metal cation</name>
        <dbReference type="ChEBI" id="CHEBI:60240"/>
    </ligand>
</feature>
<feature type="binding site" evidence="5">
    <location>
        <position position="115"/>
    </location>
    <ligand>
        <name>a divalent metal cation</name>
        <dbReference type="ChEBI" id="CHEBI:60240"/>
    </ligand>
</feature>
<feature type="binding site" evidence="5">
    <location>
        <position position="117"/>
    </location>
    <ligand>
        <name>a divalent metal cation</name>
        <dbReference type="ChEBI" id="CHEBI:60240"/>
    </ligand>
</feature>
<feature type="binding site" evidence="4">
    <location>
        <begin position="423"/>
        <end position="430"/>
    </location>
    <ligand>
        <name>ATP</name>
        <dbReference type="ChEBI" id="CHEBI:30616"/>
    </ligand>
</feature>
<feature type="splice variant" id="VSP_059928" description="In isoform NS1-70.">
    <original>NL</original>
    <variation>RL</variation>
    <location>
        <begin position="639"/>
        <end position="640"/>
    </location>
</feature>
<feature type="splice variant" id="VSP_059929" description="In isoform NS1-70.">
    <location>
        <begin position="641"/>
        <end position="776"/>
    </location>
</feature>
<dbReference type="EC" id="3.1.21.-" evidence="3"/>
<dbReference type="EC" id="3.6.4.12" evidence="3"/>
<dbReference type="EMBL" id="FJ170278">
    <property type="protein sequence ID" value="ACJ38931.1"/>
    <property type="molecule type" value="Genomic_DNA"/>
</dbReference>
<dbReference type="EMBL" id="GQ200737">
    <property type="protein sequence ID" value="ACS74733.1"/>
    <property type="molecule type" value="Genomic_DNA"/>
</dbReference>
<dbReference type="SMR" id="B9UYK5"/>
<dbReference type="KEGG" id="vg:7755626"/>
<dbReference type="Proteomes" id="UP000098880">
    <property type="component" value="Genome"/>
</dbReference>
<dbReference type="Proteomes" id="UP000150026">
    <property type="component" value="Segment"/>
</dbReference>
<dbReference type="GO" id="GO:0042025">
    <property type="term" value="C:host cell nucleus"/>
    <property type="evidence" value="ECO:0007669"/>
    <property type="project" value="UniProtKB-SubCell"/>
</dbReference>
<dbReference type="GO" id="GO:0005524">
    <property type="term" value="F:ATP binding"/>
    <property type="evidence" value="ECO:0007669"/>
    <property type="project" value="UniProtKB-KW"/>
</dbReference>
<dbReference type="GO" id="GO:0016887">
    <property type="term" value="F:ATP hydrolysis activity"/>
    <property type="evidence" value="ECO:0007669"/>
    <property type="project" value="RHEA"/>
</dbReference>
<dbReference type="GO" id="GO:0003677">
    <property type="term" value="F:DNA binding"/>
    <property type="evidence" value="ECO:0007669"/>
    <property type="project" value="UniProtKB-KW"/>
</dbReference>
<dbReference type="GO" id="GO:0004519">
    <property type="term" value="F:endonuclease activity"/>
    <property type="evidence" value="ECO:0007669"/>
    <property type="project" value="UniProtKB-KW"/>
</dbReference>
<dbReference type="GO" id="GO:0004386">
    <property type="term" value="F:helicase activity"/>
    <property type="evidence" value="ECO:0007669"/>
    <property type="project" value="UniProtKB-KW"/>
</dbReference>
<dbReference type="GO" id="GO:0046872">
    <property type="term" value="F:metal ion binding"/>
    <property type="evidence" value="ECO:0007669"/>
    <property type="project" value="UniProtKB-KW"/>
</dbReference>
<dbReference type="GO" id="GO:0006260">
    <property type="term" value="P:DNA replication"/>
    <property type="evidence" value="ECO:0007669"/>
    <property type="project" value="UniProtKB-KW"/>
</dbReference>
<dbReference type="GO" id="GO:0039693">
    <property type="term" value="P:viral DNA genome replication"/>
    <property type="evidence" value="ECO:0007669"/>
    <property type="project" value="UniProtKB-KW"/>
</dbReference>
<dbReference type="Gene3D" id="3.40.1310.20">
    <property type="match status" value="1"/>
</dbReference>
<dbReference type="Gene3D" id="3.40.50.300">
    <property type="entry name" value="P-loop containing nucleotide triphosphate hydrolases"/>
    <property type="match status" value="1"/>
</dbReference>
<dbReference type="InterPro" id="IPR054766">
    <property type="entry name" value="BoV_NS1-like_N"/>
</dbReference>
<dbReference type="InterPro" id="IPR014015">
    <property type="entry name" value="Helicase_SF3_DNA-vir"/>
</dbReference>
<dbReference type="InterPro" id="IPR027417">
    <property type="entry name" value="P-loop_NTPase"/>
</dbReference>
<dbReference type="InterPro" id="IPR001257">
    <property type="entry name" value="Parvovirus_NS1_helicase"/>
</dbReference>
<dbReference type="InterPro" id="IPR049901">
    <property type="entry name" value="PV_NS1-NUC"/>
</dbReference>
<dbReference type="Pfam" id="PF22419">
    <property type="entry name" value="HBoV_NS1-like_N"/>
    <property type="match status" value="1"/>
</dbReference>
<dbReference type="Pfam" id="PF01057">
    <property type="entry name" value="Parvo_NS1"/>
    <property type="match status" value="1"/>
</dbReference>
<dbReference type="SUPFAM" id="SSF52540">
    <property type="entry name" value="P-loop containing nucleoside triphosphate hydrolases"/>
    <property type="match status" value="1"/>
</dbReference>
<dbReference type="PROSITE" id="PS52022">
    <property type="entry name" value="PV_NS1_NUC"/>
    <property type="match status" value="1"/>
</dbReference>
<dbReference type="PROSITE" id="PS51206">
    <property type="entry name" value="SF3_HELICASE_1"/>
    <property type="match status" value="1"/>
</dbReference>
<accession>B9UYK5</accession>
<accession>C6KF52</accession>
<organismHost>
    <name type="scientific">Homo sapiens</name>
    <name type="common">Human</name>
    <dbReference type="NCBI Taxonomy" id="9606"/>
</organismHost>
<organism>
    <name type="scientific">Human bocavirus 2</name>
    <name type="common">HBoV2</name>
    <name type="synonym">Human bocavirus type 2</name>
    <dbReference type="NCBI Taxonomy" id="573977"/>
    <lineage>
        <taxon>Viruses</taxon>
        <taxon>Monodnaviria</taxon>
        <taxon>Shotokuvirae</taxon>
        <taxon>Cossaviricota</taxon>
        <taxon>Quintoviricetes</taxon>
        <taxon>Piccovirales</taxon>
        <taxon>Parvoviridae</taxon>
        <taxon>Parvovirinae</taxon>
        <taxon>Bocaparvovirus</taxon>
        <taxon>Bocaparvovirus primate2</taxon>
    </lineage>
</organism>
<reference key="1">
    <citation type="journal article" date="2009" name="J. Infect. Dis.">
        <title>A newly identified bocavirus species in human stool.</title>
        <authorList>
            <person name="Kapoor A."/>
            <person name="Slikas E."/>
            <person name="Simmonds P."/>
            <person name="Chieochansin T."/>
            <person name="Naeem A."/>
            <person name="Shaukat S."/>
            <person name="Alam M.M."/>
            <person name="Sharif S."/>
            <person name="Angez M."/>
            <person name="Zaidi S."/>
            <person name="Delwart E."/>
        </authorList>
    </citation>
    <scope>NUCLEOTIDE SEQUENCE [GENOMIC DNA] (ISOFORM NS1-70)</scope>
    <source>
        <strain>PK-5510</strain>
    </source>
</reference>
<reference key="2">
    <citation type="journal article" date="2010" name="Virology">
        <title>Characterization of the gene expression profile of human bocavirus.</title>
        <authorList>
            <person name="Chen A.Y."/>
            <person name="Cheng F."/>
            <person name="Lou S."/>
            <person name="Luo Y."/>
            <person name="Liu Z."/>
            <person name="Delwart E."/>
            <person name="Pintel D."/>
            <person name="Qiu J."/>
        </authorList>
    </citation>
    <scope>NUCLEOTIDE SEQUENCE [GENOMIC DNA] (ISOFORM NS1-70)</scope>
    <source>
        <strain>KU1</strain>
    </source>
</reference>
<keyword id="KW-0025">Alternative splicing</keyword>
<keyword id="KW-0067">ATP-binding</keyword>
<keyword id="KW-0190">Covalent protein-DNA linkage</keyword>
<keyword id="KW-0235">DNA replication</keyword>
<keyword id="KW-0238">DNA-binding</keyword>
<keyword id="KW-0255">Endonuclease</keyword>
<keyword id="KW-0347">Helicase</keyword>
<keyword id="KW-1048">Host nucleus</keyword>
<keyword id="KW-0378">Hydrolase</keyword>
<keyword id="KW-0460">Magnesium</keyword>
<keyword id="KW-0479">Metal-binding</keyword>
<keyword id="KW-0511">Multifunctional enzyme</keyword>
<keyword id="KW-0540">Nuclease</keyword>
<keyword id="KW-0547">Nucleotide-binding</keyword>
<keyword id="KW-0804">Transcription</keyword>
<keyword id="KW-0805">Transcription regulation</keyword>
<keyword id="KW-1194">Viral DNA replication</keyword>
<evidence type="ECO:0000250" key="1">
    <source>
        <dbReference type="UniProtKB" id="D0EZM8"/>
    </source>
</evidence>
<evidence type="ECO:0000250" key="2">
    <source>
        <dbReference type="UniProtKB" id="P03134"/>
    </source>
</evidence>
<evidence type="ECO:0000250" key="3">
    <source>
        <dbReference type="UniProtKB" id="Q9PZT1"/>
    </source>
</evidence>
<evidence type="ECO:0000255" key="4">
    <source>
        <dbReference type="PROSITE-ProRule" id="PRU00551"/>
    </source>
</evidence>
<evidence type="ECO:0000255" key="5">
    <source>
        <dbReference type="PROSITE-ProRule" id="PRU01366"/>
    </source>
</evidence>
<evidence type="ECO:0000256" key="6">
    <source>
        <dbReference type="SAM" id="MobiDB-lite"/>
    </source>
</evidence>
<evidence type="ECO:0000305" key="7"/>
<comment type="function">
    <text evidence="2">Multifunctional protein which displays endonuclease and helicase activities required for initiating and directing viral DNA replication. Also plays a role in viral packaging and transactivation of several promoters. Binds site-specifically to 2-3 approximate tandem copies within the origins of replication (Ori), unwinds this hairpin region and nicks one DNA strand thereby initiating the rolling circle replication (RCR). Becomes covalently attached to the 5' end of the nick and provides a 3'OH for priming DNA synthesis. The helicase activity unwinds DNA in a 3'-5' direction on the longer strand. Participates in the transcriptional regulation of several promoters.</text>
</comment>
<comment type="catalytic activity">
    <reaction evidence="2">
        <text>ATP + H2O = ADP + phosphate + H(+)</text>
        <dbReference type="Rhea" id="RHEA:13065"/>
        <dbReference type="ChEBI" id="CHEBI:15377"/>
        <dbReference type="ChEBI" id="CHEBI:15378"/>
        <dbReference type="ChEBI" id="CHEBI:30616"/>
        <dbReference type="ChEBI" id="CHEBI:43474"/>
        <dbReference type="ChEBI" id="CHEBI:456216"/>
        <dbReference type="EC" id="3.6.4.12"/>
    </reaction>
</comment>
<comment type="cofactor">
    <cofactor evidence="2">
        <name>Mg(2+)</name>
        <dbReference type="ChEBI" id="CHEBI:18420"/>
    </cofactor>
    <text evidence="2">The endonuclease active site can probably bind other divalent cations.</text>
</comment>
<comment type="subunit">
    <text evidence="3">Homooligomer; when bound to DNA.</text>
</comment>
<comment type="subcellular location">
    <subcellularLocation>
        <location evidence="1">Host nucleus</location>
    </subcellularLocation>
</comment>
<comment type="alternative products">
    <event type="alternative splicing"/>
    <isoform>
        <id>B9UYK5-1</id>
        <name>NS1</name>
        <sequence type="displayed"/>
    </isoform>
    <isoform>
        <id>B9UYK5-2</id>
        <name>NS1-70</name>
        <sequence type="described" ref="VSP_059928 VSP_059929"/>
    </isoform>
</comment>
<comment type="domain">
    <text evidence="3">In the N-terminus, the endonuclease region is involved in binding to the origin of replication. In the middle, there are the ATPase and helicase activities. The C-terminus probably contains a transactivation domain.</text>
</comment>
<comment type="similarity">
    <text evidence="7">Belongs to the parvoviruses initiator protein NS1 family.</text>
</comment>
<name>NS1_HBOC2</name>
<proteinExistence type="inferred from homology"/>
<gene>
    <name type="primary">NS1</name>
</gene>
<sequence>MAFSAPVIRAFSQPAFTYVVKFPYENWKEEEHLLWSLLAPGTERLMIQLRNCAPHPEDDPVREDILCSLADQHYGAIFAKACYIATTTLMGQKQRTPFPRCDIICQSEIGSEHLHCHILVGGAGLSKRNAKISRATLLGLVMAELTQRCKQLLALRPFEPAEANIFHLLKRIEREAWSGHTGNWVQILQYKDKRGDLHAQPIDPLRFLKHYILPKNRLISPSSKPDVCTTPDNWFILADKTYAHTIINGLPLLEHNRKAYLQELESEVIPGPSTMAFGGRGAWEQLPEVGEQRLITSNASTAYKANKKEKLMLNLLDKCDELNLLVYEDLVSACPDLLLMLEGQPGGARLIEQVLGMHHIKVCAKYTALTFLFHLHPDQLLTSNNKALKLLLIQGYNPLQVGHAICCVLNKQMGKQNTICFYGPASTGKTNFAKAIVQGVRLYGCVNHLNKGFVFNDCRQRLIIWWEECLMHQDWVEPAKCILGGTECRIDVKHKDSVLLQQTPVIISTNHDIYSVVGGNTVSHVHAAPLKERVLQLNFMKQLPQTFGEISPVEIAELLQWCFNEYECTLTGFKQKWNLDKVPNSFPLGDLCPTHSQDYTLHENGFCTDCGGYLPHSADDFVYTDVASETTSGDCDPGNLGDTDGEDSKSEASEVDFRPSKKRRVISATPPSSPVSGPSLSTFLDTWQSQPRDEDELRIYEEQASQLQKNTKSTPEREEAQLGEPQEPQPEPDPTAWGEKLGVCSSQQPGEPPVVLYCFEDLRPSDEDEGENIGGE</sequence>